<evidence type="ECO:0000305" key="1"/>
<keyword id="KW-1185">Reference proteome</keyword>
<comment type="similarity">
    <text evidence="1">Belongs to the mimivirus L114/R131 family.</text>
</comment>
<sequence length="194" mass="21804">MNANDASNTCNGSNDSINDSDFPARSGCASFVSRLFAGSTLDEKVIDLLVDSVESQGLRRLESPSPTVLRSLSKFISDIPEENLTSLEEDAMDTKTGELVKCIRFPTLVTELTGGGKISVESKKLLGTEVLNWFRVQHDVRRTKIIVKAPIFSDGRKLSTQHEAIRYTREDVLMLIVLTWRFLQYKLKDEEIIY</sequence>
<accession>Q5UPI4</accession>
<organism>
    <name type="scientific">Acanthamoeba polyphaga mimivirus</name>
    <name type="common">APMV</name>
    <dbReference type="NCBI Taxonomy" id="212035"/>
    <lineage>
        <taxon>Viruses</taxon>
        <taxon>Varidnaviria</taxon>
        <taxon>Bamfordvirae</taxon>
        <taxon>Nucleocytoviricota</taxon>
        <taxon>Megaviricetes</taxon>
        <taxon>Imitervirales</taxon>
        <taxon>Mimiviridae</taxon>
        <taxon>Megamimivirinae</taxon>
        <taxon>Mimivirus</taxon>
        <taxon>Mimivirus bradfordmassiliense</taxon>
    </lineage>
</organism>
<organismHost>
    <name type="scientific">Acanthamoeba polyphaga</name>
    <name type="common">Amoeba</name>
    <dbReference type="NCBI Taxonomy" id="5757"/>
</organismHost>
<reference key="1">
    <citation type="journal article" date="2004" name="Science">
        <title>The 1.2-megabase genome sequence of Mimivirus.</title>
        <authorList>
            <person name="Raoult D."/>
            <person name="Audic S."/>
            <person name="Robert C."/>
            <person name="Abergel C."/>
            <person name="Renesto P."/>
            <person name="Ogata H."/>
            <person name="La Scola B."/>
            <person name="Susan M."/>
            <person name="Claverie J.-M."/>
        </authorList>
    </citation>
    <scope>NUCLEOTIDE SEQUENCE [LARGE SCALE GENOMIC DNA]</scope>
    <source>
        <strain>Rowbotham-Bradford</strain>
    </source>
</reference>
<name>YL114_MIMIV</name>
<feature type="chain" id="PRO_0000071214" description="Uncharacterized protein L114">
    <location>
        <begin position="1"/>
        <end position="194"/>
    </location>
</feature>
<gene>
    <name type="ordered locus">MIMI_L114</name>
</gene>
<dbReference type="EMBL" id="AY653733">
    <property type="protein sequence ID" value="AAV50389.1"/>
    <property type="molecule type" value="Genomic_DNA"/>
</dbReference>
<dbReference type="KEGG" id="vg:9924712"/>
<dbReference type="Proteomes" id="UP000001134">
    <property type="component" value="Genome"/>
</dbReference>
<proteinExistence type="inferred from homology"/>
<protein>
    <recommendedName>
        <fullName>Uncharacterized protein L114</fullName>
    </recommendedName>
</protein>